<evidence type="ECO:0000250" key="1">
    <source>
        <dbReference type="UniProtKB" id="Q8W1S1"/>
    </source>
</evidence>
<evidence type="ECO:0000250" key="2">
    <source>
        <dbReference type="UniProtKB" id="Q9S7D1"/>
    </source>
</evidence>
<evidence type="ECO:0000255" key="3"/>
<evidence type="ECO:0000269" key="4">
    <source>
    </source>
</evidence>
<evidence type="ECO:0000303" key="5">
    <source>
    </source>
</evidence>
<evidence type="ECO:0000305" key="6"/>
<evidence type="ECO:0000312" key="7">
    <source>
        <dbReference type="EMBL" id="KRH68005.1"/>
    </source>
</evidence>
<sequence length="783" mass="89193">MATHPQTPTSSNAFSFISKGWREVRDSADADLRLMRDRANSFKDLATSFDRELENFFNSATPPFSVPAMRSPPPKEIEFVKSLRPKLSEIRRAYSSPDFSKKVLEKWRPRTQIRINLSAIKNAIVSAEEEEEGIVDFEKRRRRRLSFWEEWKGEGEGESRDWEPIRVLKTRLKEFEKRGSSFDAFKNSEFVEKVKSSLKSMCKEPLESKEVPPLDVPELLAYIVKQSGPFLDHLGVKRDICDKIVESLYSKCKNHQLLHSLSGEESSVLGNGNINDELDLRIASVLQSTGHRYEGGFWTDHAKHDPLDNERHVAIVTTASLPWMTGTAVNPLFRAAYLSQSAKQKVTLLVPWLCKSDQELVYPSNLTFTSPEEQEAYIRSWLEERIGFKADFKISFYPGKFSEARRSIIPAGDTSQFIPSRDADIAILEEPEHLNWYHHGKRWTDKFNHVVGIVHTNYLEYIKREKNGALQAFLVKHINNWVTRAYCHKVLRLSAATQDLPKSVICNVHGVNPKFLKIGEKIAAERELGQKAFTKGAYFLGKLVWAKGYKELIDLLAKHKADLDGFKLDVFGNGEDANEVQSAARRLDLNLNFQKGRDHADDSLHGYKVFINPSISDVLCTATAEALAMGKFVVCADHPSNEFFRSFPNCLTYRTSEDFVAKVKEALENEPYPLTPEQRYQLSWEAATQRFMEYSELDRILNKENNGEKASVDKGKLIAKSASMPNLTELVDGGLAFAHYCLTGNEFLRLCTGAIPGTRDYDKQHCKDLHLLPPLVENPIYGW</sequence>
<dbReference type="EC" id="2.4.1.241" evidence="1"/>
<dbReference type="EMBL" id="AY635907">
    <property type="protein sequence ID" value="AAT67420.1"/>
    <property type="molecule type" value="mRNA"/>
</dbReference>
<dbReference type="EMBL" id="CM000836">
    <property type="protein sequence ID" value="KRH68005.1"/>
    <property type="molecule type" value="Genomic_DNA"/>
</dbReference>
<dbReference type="SMR" id="Q6DW76"/>
<dbReference type="FunCoup" id="Q6DW76">
    <property type="interactions" value="1021"/>
</dbReference>
<dbReference type="STRING" id="3847.Q6DW76"/>
<dbReference type="CAZy" id="GT4">
    <property type="family name" value="Glycosyltransferase Family 4"/>
</dbReference>
<dbReference type="PaxDb" id="3847-GLYMA03G36050.1"/>
<dbReference type="EnsemblPlants" id="KRH68005">
    <property type="protein sequence ID" value="KRH68005"/>
    <property type="gene ID" value="GLYMA_03G202100"/>
</dbReference>
<dbReference type="Gramene" id="KRH68005">
    <property type="protein sequence ID" value="KRH68005"/>
    <property type="gene ID" value="GLYMA_03G202100"/>
</dbReference>
<dbReference type="KEGG" id="gmx:100796354"/>
<dbReference type="eggNOG" id="ENOG502QQ73">
    <property type="taxonomic scope" value="Eukaryota"/>
</dbReference>
<dbReference type="HOGENOM" id="CLU_011647_0_1_1"/>
<dbReference type="InParanoid" id="Q6DW76"/>
<dbReference type="OrthoDB" id="44480at2759"/>
<dbReference type="Proteomes" id="UP000008827">
    <property type="component" value="Chromosome 3"/>
</dbReference>
<dbReference type="GO" id="GO:0009707">
    <property type="term" value="C:chloroplast outer membrane"/>
    <property type="evidence" value="ECO:0000318"/>
    <property type="project" value="GO_Central"/>
</dbReference>
<dbReference type="GO" id="GO:0046481">
    <property type="term" value="F:digalactosyldiacylglycerol synthase activity"/>
    <property type="evidence" value="ECO:0007669"/>
    <property type="project" value="UniProtKB-EC"/>
</dbReference>
<dbReference type="GO" id="GO:0035250">
    <property type="term" value="F:UDP-galactosyltransferase activity"/>
    <property type="evidence" value="ECO:0000318"/>
    <property type="project" value="GO_Central"/>
</dbReference>
<dbReference type="GO" id="GO:0019375">
    <property type="term" value="P:galactolipid biosynthetic process"/>
    <property type="evidence" value="ECO:0000318"/>
    <property type="project" value="GO_Central"/>
</dbReference>
<dbReference type="GO" id="GO:0009877">
    <property type="term" value="P:nodulation"/>
    <property type="evidence" value="ECO:0007669"/>
    <property type="project" value="UniProtKB-KW"/>
</dbReference>
<dbReference type="CDD" id="cd01635">
    <property type="entry name" value="Glycosyltransferase_GTB-type"/>
    <property type="match status" value="1"/>
</dbReference>
<dbReference type="FunFam" id="3.40.50.2000:FF:000325">
    <property type="entry name" value="Digalactosyldiacylglycerol synthase 1, chloroplastic"/>
    <property type="match status" value="1"/>
</dbReference>
<dbReference type="FunFam" id="3.40.50.2000:FF:000218">
    <property type="entry name" value="Digalactosyldiacylglycerol synthase 1, chloroplastic-like"/>
    <property type="match status" value="1"/>
</dbReference>
<dbReference type="Gene3D" id="3.40.50.2000">
    <property type="entry name" value="Glycogen Phosphorylase B"/>
    <property type="match status" value="1"/>
</dbReference>
<dbReference type="InterPro" id="IPR044525">
    <property type="entry name" value="DGDG1/2"/>
</dbReference>
<dbReference type="InterPro" id="IPR001296">
    <property type="entry name" value="Glyco_trans_1"/>
</dbReference>
<dbReference type="PANTHER" id="PTHR46132:SF6">
    <property type="entry name" value="DIGALACTOSYLDIACYLGLYCEROL SYNTHASE 1, CHLOROPLASTIC"/>
    <property type="match status" value="1"/>
</dbReference>
<dbReference type="PANTHER" id="PTHR46132">
    <property type="entry name" value="DIGALACTOSYLDIACYLGLYCEROL SYNTHASE 2, CHLOROPLASTIC"/>
    <property type="match status" value="1"/>
</dbReference>
<dbReference type="Pfam" id="PF00534">
    <property type="entry name" value="Glycos_transf_1"/>
    <property type="match status" value="1"/>
</dbReference>
<dbReference type="SUPFAM" id="SSF53756">
    <property type="entry name" value="UDP-Glycosyltransferase/glycogen phosphorylase"/>
    <property type="match status" value="1"/>
</dbReference>
<feature type="transit peptide" description="Chloroplast" evidence="3">
    <location>
        <begin position="1"/>
        <end status="unknown"/>
    </location>
</feature>
<feature type="chain" id="PRO_0000252339" description="Digalactosyldiacylglycerol synthase 1, chloroplastic">
    <location>
        <begin status="unknown"/>
        <end position="783"/>
    </location>
</feature>
<feature type="sequence conflict" description="In Ref. 1; AAT67420." evidence="6" ref="1">
    <original>L</original>
    <variation>M</variation>
    <location>
        <position position="543"/>
    </location>
</feature>
<feature type="sequence conflict" description="In Ref. 1; AAT67420." evidence="6" ref="1">
    <original>G</original>
    <variation>R</variation>
    <location>
        <position position="606"/>
    </location>
</feature>
<feature type="sequence conflict" description="In Ref. 1; AAT67420." evidence="6" ref="1">
    <original>A</original>
    <variation>T</variation>
    <location>
        <position position="661"/>
    </location>
</feature>
<feature type="sequence conflict" description="In Ref. 1; AAT67420." evidence="6" ref="1">
    <original>R</original>
    <variation>G</variation>
    <location>
        <position position="699"/>
    </location>
</feature>
<feature type="sequence conflict" description="In Ref. 1; AAT67420." evidence="6" ref="1">
    <original>AS</original>
    <variation>SR</variation>
    <location>
        <begin position="710"/>
        <end position="711"/>
    </location>
</feature>
<feature type="sequence conflict" description="In Ref. 1; AAT67420." evidence="6" ref="1">
    <original>L</original>
    <variation>Q</variation>
    <location>
        <position position="775"/>
    </location>
</feature>
<proteinExistence type="evidence at transcript level"/>
<reference key="1">
    <citation type="journal article" date="2004" name="J. Biol. Chem.">
        <title>The galactolipid digalactosyldiacylglycerol accumulates in the peribacteroid membrane of nitrogen-fixing nodules of Soybean and Lotus.</title>
        <authorList>
            <person name="Gaude N."/>
            <person name="Tippmann H."/>
            <person name="Flemetakis E."/>
            <person name="Katinakis P."/>
            <person name="Udvardi M."/>
            <person name="Doermann P."/>
        </authorList>
    </citation>
    <scope>NUCLEOTIDE SEQUENCE [MRNA]</scope>
    <scope>FUNCTION</scope>
    <scope>SUBCELLULAR LOCATION</scope>
    <scope>TISSUE SPECIFICITY</scope>
    <scope>DEVELOPMENTAL STAGE</scope>
    <scope>INDUCTION</scope>
    <source>
        <strain>cv. Stevens</strain>
    </source>
</reference>
<reference key="2">
    <citation type="journal article" date="2010" name="Nature">
        <title>Genome sequence of the palaeopolyploid soybean.</title>
        <authorList>
            <person name="Schmutz J."/>
            <person name="Cannon S.B."/>
            <person name="Schlueter J."/>
            <person name="Ma J."/>
            <person name="Mitros T."/>
            <person name="Nelson W."/>
            <person name="Hyten D.L."/>
            <person name="Song Q."/>
            <person name="Thelen J.J."/>
            <person name="Cheng J."/>
            <person name="Xu D."/>
            <person name="Hellsten U."/>
            <person name="May G.D."/>
            <person name="Yu Y."/>
            <person name="Sakurai T."/>
            <person name="Umezawa T."/>
            <person name="Bhattacharyya M.K."/>
            <person name="Sandhu D."/>
            <person name="Valliyodan B."/>
            <person name="Lindquist E."/>
            <person name="Peto M."/>
            <person name="Grant D."/>
            <person name="Shu S."/>
            <person name="Goodstein D."/>
            <person name="Barry K."/>
            <person name="Futrell-Griggs M."/>
            <person name="Abernathy B."/>
            <person name="Du J."/>
            <person name="Tian Z."/>
            <person name="Zhu L."/>
            <person name="Gill N."/>
            <person name="Joshi T."/>
            <person name="Libault M."/>
            <person name="Sethuraman A."/>
            <person name="Zhang X.-C."/>
            <person name="Shinozaki K."/>
            <person name="Nguyen H.T."/>
            <person name="Wing R.A."/>
            <person name="Cregan P."/>
            <person name="Specht J."/>
            <person name="Grimwood J."/>
            <person name="Rokhsar D."/>
            <person name="Stacey G."/>
            <person name="Shoemaker R.C."/>
            <person name="Jackson S.A."/>
        </authorList>
    </citation>
    <scope>NUCLEOTIDE SEQUENCE [LARGE SCALE GENOMIC DNA]</scope>
    <source>
        <strain>cv. Williams 82</strain>
        <tissue>Callus</tissue>
    </source>
</reference>
<organism>
    <name type="scientific">Glycine max</name>
    <name type="common">Soybean</name>
    <name type="synonym">Glycine hispida</name>
    <dbReference type="NCBI Taxonomy" id="3847"/>
    <lineage>
        <taxon>Eukaryota</taxon>
        <taxon>Viridiplantae</taxon>
        <taxon>Streptophyta</taxon>
        <taxon>Embryophyta</taxon>
        <taxon>Tracheophyta</taxon>
        <taxon>Spermatophyta</taxon>
        <taxon>Magnoliopsida</taxon>
        <taxon>eudicotyledons</taxon>
        <taxon>Gunneridae</taxon>
        <taxon>Pentapetalae</taxon>
        <taxon>rosids</taxon>
        <taxon>fabids</taxon>
        <taxon>Fabales</taxon>
        <taxon>Fabaceae</taxon>
        <taxon>Papilionoideae</taxon>
        <taxon>50 kb inversion clade</taxon>
        <taxon>NPAAA clade</taxon>
        <taxon>indigoferoid/millettioid clade</taxon>
        <taxon>Phaseoleae</taxon>
        <taxon>Glycine</taxon>
        <taxon>Glycine subgen. Soja</taxon>
    </lineage>
</organism>
<accession>Q6DW76</accession>
<accession>I1JQ87</accession>
<keyword id="KW-0150">Chloroplast</keyword>
<keyword id="KW-0328">Glycosyltransferase</keyword>
<keyword id="KW-0472">Membrane</keyword>
<keyword id="KW-0536">Nodulation</keyword>
<keyword id="KW-0934">Plastid</keyword>
<keyword id="KW-1002">Plastid outer membrane</keyword>
<keyword id="KW-1185">Reference proteome</keyword>
<keyword id="KW-0808">Transferase</keyword>
<keyword id="KW-0809">Transit peptide</keyword>
<name>DGDG1_SOYBN</name>
<comment type="function">
    <text evidence="4">Involved in the synthesis of diacylglycerol galactolipids that are specifically found in thylakoid and in nodule peribacteroid membranes (PubMed:15159398). Specific for alpha-glycosidic linkages (PubMed:15159398).</text>
</comment>
<comment type="catalytic activity">
    <reaction evidence="1">
        <text>a 1,2-diacyl-3-O-(beta-D-galactosyl)-sn-glycerol + UDP-alpha-D-galactose = a 1,2-diacyl-3-O-[alpha-D-galactosyl-(1-&gt;6)-beta-D-galactosyl]-sn-glycerol + UDP + H(+)</text>
        <dbReference type="Rhea" id="RHEA:10520"/>
        <dbReference type="ChEBI" id="CHEBI:15378"/>
        <dbReference type="ChEBI" id="CHEBI:17615"/>
        <dbReference type="ChEBI" id="CHEBI:28396"/>
        <dbReference type="ChEBI" id="CHEBI:58223"/>
        <dbReference type="ChEBI" id="CHEBI:66914"/>
        <dbReference type="EC" id="2.4.1.241"/>
    </reaction>
</comment>
<comment type="subcellular location">
    <subcellularLocation>
        <location evidence="2">Plastid</location>
        <location evidence="2">Chloroplast outer membrane</location>
    </subcellularLocation>
    <subcellularLocation>
        <location evidence="1">Plastid outer membrane</location>
    </subcellularLocation>
</comment>
<comment type="tissue specificity">
    <text evidence="4">Expressed in leaves, roots and nodules.</text>
</comment>
<comment type="developmental stage">
    <text evidence="4">Very low expression in young nodules, increasing in the later stages of development.</text>
</comment>
<comment type="induction">
    <text evidence="4">Up-regulated in leaves by phosphate deficiency.</text>
</comment>
<comment type="similarity">
    <text evidence="6">Belongs to the glycosyltransferase group 1 family. Glycosyltransferase 4 subfamily.</text>
</comment>
<gene>
    <name evidence="5" type="primary">DGD1</name>
    <name evidence="7" type="ordered locus">GLYMA_03G202100</name>
</gene>
<protein>
    <recommendedName>
        <fullName evidence="5">Digalactosyldiacylglycerol synthase 1, chloroplastic</fullName>
        <shortName evidence="5">GmDGD1</shortName>
        <ecNumber evidence="1">2.4.1.241</ecNumber>
    </recommendedName>
</protein>